<sequence length="165" mass="17676">MALNLQGKQAIVAEVKEVAKGALSAVVADSRGVTVDKMTELRRAGREAGVHMQVVRNTLLRRIVEGTPFECLKDTFVGPTLIAFSAEHPGAAARLFKAFAKDNAKFEVKAAAFEGELIPAAQIDRLATLPTYEEAIARLMGTMKEAAAGKLVRTLAALRDQKEAA</sequence>
<proteinExistence type="inferred from homology"/>
<accession>A4TS31</accession>
<protein>
    <recommendedName>
        <fullName evidence="1">Large ribosomal subunit protein uL10</fullName>
    </recommendedName>
    <alternativeName>
        <fullName evidence="2">50S ribosomal protein L10</fullName>
    </alternativeName>
</protein>
<reference key="1">
    <citation type="submission" date="2007-02" db="EMBL/GenBank/DDBJ databases">
        <title>Complete sequence of chromosome of Yersinia pestis Pestoides F.</title>
        <authorList>
            <consortium name="US DOE Joint Genome Institute"/>
            <person name="Copeland A."/>
            <person name="Lucas S."/>
            <person name="Lapidus A."/>
            <person name="Barry K."/>
            <person name="Detter J.C."/>
            <person name="Glavina del Rio T."/>
            <person name="Hammon N."/>
            <person name="Israni S."/>
            <person name="Dalin E."/>
            <person name="Tice H."/>
            <person name="Pitluck S."/>
            <person name="Di Bartolo G."/>
            <person name="Chain P."/>
            <person name="Malfatti S."/>
            <person name="Shin M."/>
            <person name="Vergez L."/>
            <person name="Schmutz J."/>
            <person name="Larimer F."/>
            <person name="Land M."/>
            <person name="Hauser L."/>
            <person name="Worsham P."/>
            <person name="Chu M."/>
            <person name="Bearden S."/>
            <person name="Garcia E."/>
            <person name="Richardson P."/>
        </authorList>
    </citation>
    <scope>NUCLEOTIDE SEQUENCE [LARGE SCALE GENOMIC DNA]</scope>
    <source>
        <strain>Pestoides F</strain>
    </source>
</reference>
<keyword id="KW-0687">Ribonucleoprotein</keyword>
<keyword id="KW-0689">Ribosomal protein</keyword>
<keyword id="KW-0694">RNA-binding</keyword>
<keyword id="KW-0699">rRNA-binding</keyword>
<name>RL10_YERPP</name>
<evidence type="ECO:0000255" key="1">
    <source>
        <dbReference type="HAMAP-Rule" id="MF_00362"/>
    </source>
</evidence>
<evidence type="ECO:0000305" key="2"/>
<feature type="chain" id="PRO_1000005621" description="Large ribosomal subunit protein uL10">
    <location>
        <begin position="1"/>
        <end position="165"/>
    </location>
</feature>
<organism>
    <name type="scientific">Yersinia pestis (strain Pestoides F)</name>
    <dbReference type="NCBI Taxonomy" id="386656"/>
    <lineage>
        <taxon>Bacteria</taxon>
        <taxon>Pseudomonadati</taxon>
        <taxon>Pseudomonadota</taxon>
        <taxon>Gammaproteobacteria</taxon>
        <taxon>Enterobacterales</taxon>
        <taxon>Yersiniaceae</taxon>
        <taxon>Yersinia</taxon>
    </lineage>
</organism>
<dbReference type="EMBL" id="CP000668">
    <property type="protein sequence ID" value="ABP42093.1"/>
    <property type="molecule type" value="Genomic_DNA"/>
</dbReference>
<dbReference type="RefSeq" id="WP_002210674.1">
    <property type="nucleotide sequence ID" value="NZ_CP009715.1"/>
</dbReference>
<dbReference type="GeneID" id="96663774"/>
<dbReference type="KEGG" id="ypp:YPDSF_3747"/>
<dbReference type="PATRIC" id="fig|386656.14.peg.776"/>
<dbReference type="GO" id="GO:0015934">
    <property type="term" value="C:large ribosomal subunit"/>
    <property type="evidence" value="ECO:0007669"/>
    <property type="project" value="InterPro"/>
</dbReference>
<dbReference type="GO" id="GO:0070180">
    <property type="term" value="F:large ribosomal subunit rRNA binding"/>
    <property type="evidence" value="ECO:0007669"/>
    <property type="project" value="UniProtKB-UniRule"/>
</dbReference>
<dbReference type="GO" id="GO:0003735">
    <property type="term" value="F:structural constituent of ribosome"/>
    <property type="evidence" value="ECO:0007669"/>
    <property type="project" value="InterPro"/>
</dbReference>
<dbReference type="GO" id="GO:0006412">
    <property type="term" value="P:translation"/>
    <property type="evidence" value="ECO:0007669"/>
    <property type="project" value="UniProtKB-UniRule"/>
</dbReference>
<dbReference type="CDD" id="cd05797">
    <property type="entry name" value="Ribosomal_L10"/>
    <property type="match status" value="1"/>
</dbReference>
<dbReference type="FunFam" id="3.30.70.1730:FF:000001">
    <property type="entry name" value="50S ribosomal protein L10"/>
    <property type="match status" value="1"/>
</dbReference>
<dbReference type="Gene3D" id="3.30.70.1730">
    <property type="match status" value="1"/>
</dbReference>
<dbReference type="Gene3D" id="6.10.250.2350">
    <property type="match status" value="1"/>
</dbReference>
<dbReference type="HAMAP" id="MF_00362">
    <property type="entry name" value="Ribosomal_uL10"/>
    <property type="match status" value="1"/>
</dbReference>
<dbReference type="InterPro" id="IPR001790">
    <property type="entry name" value="Ribosomal_uL10"/>
</dbReference>
<dbReference type="InterPro" id="IPR043141">
    <property type="entry name" value="Ribosomal_uL10-like_sf"/>
</dbReference>
<dbReference type="InterPro" id="IPR022973">
    <property type="entry name" value="Ribosomal_uL10_bac"/>
</dbReference>
<dbReference type="InterPro" id="IPR047865">
    <property type="entry name" value="Ribosomal_uL10_bac_type"/>
</dbReference>
<dbReference type="InterPro" id="IPR002363">
    <property type="entry name" value="Ribosomal_uL10_CS_bac"/>
</dbReference>
<dbReference type="NCBIfam" id="NF000955">
    <property type="entry name" value="PRK00099.1-1"/>
    <property type="match status" value="1"/>
</dbReference>
<dbReference type="PANTHER" id="PTHR11560">
    <property type="entry name" value="39S RIBOSOMAL PROTEIN L10, MITOCHONDRIAL"/>
    <property type="match status" value="1"/>
</dbReference>
<dbReference type="Pfam" id="PF00466">
    <property type="entry name" value="Ribosomal_L10"/>
    <property type="match status" value="1"/>
</dbReference>
<dbReference type="SUPFAM" id="SSF160369">
    <property type="entry name" value="Ribosomal protein L10-like"/>
    <property type="match status" value="1"/>
</dbReference>
<dbReference type="PROSITE" id="PS01109">
    <property type="entry name" value="RIBOSOMAL_L10"/>
    <property type="match status" value="1"/>
</dbReference>
<comment type="function">
    <text evidence="1">Forms part of the ribosomal stalk, playing a central role in the interaction of the ribosome with GTP-bound translation factors.</text>
</comment>
<comment type="subunit">
    <text evidence="1">Part of the ribosomal stalk of the 50S ribosomal subunit. The N-terminus interacts with L11 and the large rRNA to form the base of the stalk. The C-terminus forms an elongated spine to which L12 dimers bind in a sequential fashion forming a multimeric L10(L12)X complex.</text>
</comment>
<comment type="similarity">
    <text evidence="1">Belongs to the universal ribosomal protein uL10 family.</text>
</comment>
<gene>
    <name evidence="1" type="primary">rplJ</name>
    <name type="ordered locus">YPDSF_3747</name>
</gene>